<reference key="1">
    <citation type="journal article" date="2009" name="J. Bacteriol.">
        <title>Complete genome sequence and comparative genome analysis of enteropathogenic Escherichia coli O127:H6 strain E2348/69.</title>
        <authorList>
            <person name="Iguchi A."/>
            <person name="Thomson N.R."/>
            <person name="Ogura Y."/>
            <person name="Saunders D."/>
            <person name="Ooka T."/>
            <person name="Henderson I.R."/>
            <person name="Harris D."/>
            <person name="Asadulghani M."/>
            <person name="Kurokawa K."/>
            <person name="Dean P."/>
            <person name="Kenny B."/>
            <person name="Quail M.A."/>
            <person name="Thurston S."/>
            <person name="Dougan G."/>
            <person name="Hayashi T."/>
            <person name="Parkhill J."/>
            <person name="Frankel G."/>
        </authorList>
    </citation>
    <scope>NUCLEOTIDE SEQUENCE [LARGE SCALE GENOMIC DNA]</scope>
    <source>
        <strain>E2348/69 / EPEC</strain>
    </source>
</reference>
<keyword id="KW-0028">Amino-acid biosynthesis</keyword>
<keyword id="KW-0032">Aminotransferase</keyword>
<keyword id="KW-0368">Histidine biosynthesis</keyword>
<keyword id="KW-0663">Pyridoxal phosphate</keyword>
<keyword id="KW-1185">Reference proteome</keyword>
<keyword id="KW-0808">Transferase</keyword>
<feature type="chain" id="PRO_1000149094" description="Histidinol-phosphate aminotransferase">
    <location>
        <begin position="1"/>
        <end position="356"/>
    </location>
</feature>
<feature type="modified residue" description="N6-(pyridoxal phosphate)lysine" evidence="1">
    <location>
        <position position="214"/>
    </location>
</feature>
<comment type="catalytic activity">
    <reaction evidence="1">
        <text>L-histidinol phosphate + 2-oxoglutarate = 3-(imidazol-4-yl)-2-oxopropyl phosphate + L-glutamate</text>
        <dbReference type="Rhea" id="RHEA:23744"/>
        <dbReference type="ChEBI" id="CHEBI:16810"/>
        <dbReference type="ChEBI" id="CHEBI:29985"/>
        <dbReference type="ChEBI" id="CHEBI:57766"/>
        <dbReference type="ChEBI" id="CHEBI:57980"/>
        <dbReference type="EC" id="2.6.1.9"/>
    </reaction>
</comment>
<comment type="cofactor">
    <cofactor evidence="1">
        <name>pyridoxal 5'-phosphate</name>
        <dbReference type="ChEBI" id="CHEBI:597326"/>
    </cofactor>
</comment>
<comment type="pathway">
    <text evidence="1">Amino-acid biosynthesis; L-histidine biosynthesis; L-histidine from 5-phospho-alpha-D-ribose 1-diphosphate: step 7/9.</text>
</comment>
<comment type="subunit">
    <text evidence="1">Homodimer.</text>
</comment>
<comment type="similarity">
    <text evidence="1">Belongs to the class-II pyridoxal-phosphate-dependent aminotransferase family. Histidinol-phosphate aminotransferase subfamily.</text>
</comment>
<name>HIS8_ECO27</name>
<proteinExistence type="inferred from homology"/>
<evidence type="ECO:0000255" key="1">
    <source>
        <dbReference type="HAMAP-Rule" id="MF_01023"/>
    </source>
</evidence>
<organism>
    <name type="scientific">Escherichia coli O127:H6 (strain E2348/69 / EPEC)</name>
    <dbReference type="NCBI Taxonomy" id="574521"/>
    <lineage>
        <taxon>Bacteria</taxon>
        <taxon>Pseudomonadati</taxon>
        <taxon>Pseudomonadota</taxon>
        <taxon>Gammaproteobacteria</taxon>
        <taxon>Enterobacterales</taxon>
        <taxon>Enterobacteriaceae</taxon>
        <taxon>Escherichia</taxon>
    </lineage>
</organism>
<protein>
    <recommendedName>
        <fullName evidence="1">Histidinol-phosphate aminotransferase</fullName>
        <ecNumber evidence="1">2.6.1.9</ecNumber>
    </recommendedName>
    <alternativeName>
        <fullName evidence="1">Imidazole acetol-phosphate transaminase</fullName>
    </alternativeName>
</protein>
<sequence length="356" mass="39388">MSTVTITDLARENVRNLTPYQSARRLGGNGDVWLNANEYPTAVEFQLTQQTLNRYPECQPKVVIENYAQYAGVKPEQVLVSRGADEGIELLIRAFCEPGKDAILYCPPTYGMYSVSAETIGVECRTVPTLDNWQLDLQGISDKLDGVKVVYVCSPNNPTGQLINPQDFRTLLELTRGKAIVVADEAYIEFCPQASLAGWLAEYPHLAILRTLSKAFALAGLRCGFTLANEEVINLLMKVIAPYPLSTPVADIAAQALSPQGIVAMRERVAQIIAEREYLIAALQEIPCVEQVFDSETNYILARFKASSAVFKSLWDQGIILRDQNKQPSLSGCLRITVGTREESQRVIDALRAEQV</sequence>
<dbReference type="EC" id="2.6.1.9" evidence="1"/>
<dbReference type="EMBL" id="FM180568">
    <property type="protein sequence ID" value="CAS09710.1"/>
    <property type="molecule type" value="Genomic_DNA"/>
</dbReference>
<dbReference type="RefSeq" id="WP_000108994.1">
    <property type="nucleotide sequence ID" value="NC_011601.1"/>
</dbReference>
<dbReference type="SMR" id="B7UT58"/>
<dbReference type="KEGG" id="ecg:E2348C_2162"/>
<dbReference type="HOGENOM" id="CLU_017584_3_1_6"/>
<dbReference type="UniPathway" id="UPA00031">
    <property type="reaction ID" value="UER00012"/>
</dbReference>
<dbReference type="Proteomes" id="UP000008205">
    <property type="component" value="Chromosome"/>
</dbReference>
<dbReference type="GO" id="GO:0004400">
    <property type="term" value="F:histidinol-phosphate transaminase activity"/>
    <property type="evidence" value="ECO:0007669"/>
    <property type="project" value="UniProtKB-UniRule"/>
</dbReference>
<dbReference type="GO" id="GO:0030170">
    <property type="term" value="F:pyridoxal phosphate binding"/>
    <property type="evidence" value="ECO:0007669"/>
    <property type="project" value="InterPro"/>
</dbReference>
<dbReference type="GO" id="GO:0000105">
    <property type="term" value="P:L-histidine biosynthetic process"/>
    <property type="evidence" value="ECO:0007669"/>
    <property type="project" value="UniProtKB-UniRule"/>
</dbReference>
<dbReference type="CDD" id="cd00609">
    <property type="entry name" value="AAT_like"/>
    <property type="match status" value="1"/>
</dbReference>
<dbReference type="FunFam" id="3.40.640.10:FF:000032">
    <property type="entry name" value="Histidinol-phosphate aminotransferase"/>
    <property type="match status" value="1"/>
</dbReference>
<dbReference type="FunFam" id="3.90.1150.10:FF:000042">
    <property type="entry name" value="Histidinol-phosphate aminotransferase"/>
    <property type="match status" value="1"/>
</dbReference>
<dbReference type="Gene3D" id="3.90.1150.10">
    <property type="entry name" value="Aspartate Aminotransferase, domain 1"/>
    <property type="match status" value="1"/>
</dbReference>
<dbReference type="Gene3D" id="3.40.640.10">
    <property type="entry name" value="Type I PLP-dependent aspartate aminotransferase-like (Major domain)"/>
    <property type="match status" value="1"/>
</dbReference>
<dbReference type="HAMAP" id="MF_01023">
    <property type="entry name" value="HisC_aminotrans_2"/>
    <property type="match status" value="1"/>
</dbReference>
<dbReference type="InterPro" id="IPR001917">
    <property type="entry name" value="Aminotrans_II_pyridoxalP_BS"/>
</dbReference>
<dbReference type="InterPro" id="IPR004839">
    <property type="entry name" value="Aminotransferase_I/II_large"/>
</dbReference>
<dbReference type="InterPro" id="IPR005861">
    <property type="entry name" value="HisP_aminotrans"/>
</dbReference>
<dbReference type="InterPro" id="IPR015424">
    <property type="entry name" value="PyrdxlP-dep_Trfase"/>
</dbReference>
<dbReference type="InterPro" id="IPR015421">
    <property type="entry name" value="PyrdxlP-dep_Trfase_major"/>
</dbReference>
<dbReference type="InterPro" id="IPR015422">
    <property type="entry name" value="PyrdxlP-dep_Trfase_small"/>
</dbReference>
<dbReference type="NCBIfam" id="TIGR01141">
    <property type="entry name" value="hisC"/>
    <property type="match status" value="1"/>
</dbReference>
<dbReference type="PANTHER" id="PTHR42885:SF2">
    <property type="entry name" value="HISTIDINOL-PHOSPHATE AMINOTRANSFERASE"/>
    <property type="match status" value="1"/>
</dbReference>
<dbReference type="PANTHER" id="PTHR42885">
    <property type="entry name" value="HISTIDINOL-PHOSPHATE AMINOTRANSFERASE-RELATED"/>
    <property type="match status" value="1"/>
</dbReference>
<dbReference type="Pfam" id="PF00155">
    <property type="entry name" value="Aminotran_1_2"/>
    <property type="match status" value="1"/>
</dbReference>
<dbReference type="SUPFAM" id="SSF53383">
    <property type="entry name" value="PLP-dependent transferases"/>
    <property type="match status" value="1"/>
</dbReference>
<dbReference type="PROSITE" id="PS00599">
    <property type="entry name" value="AA_TRANSFER_CLASS_2"/>
    <property type="match status" value="1"/>
</dbReference>
<gene>
    <name evidence="1" type="primary">hisC</name>
    <name type="ordered locus">E2348C_2162</name>
</gene>
<accession>B7UT58</accession>